<protein>
    <recommendedName>
        <fullName evidence="1">DNA-directed RNA polymerase subunit beta'</fullName>
        <shortName evidence="1">RNAP subunit beta'</shortName>
        <ecNumber evidence="1">2.7.7.6</ecNumber>
    </recommendedName>
    <alternativeName>
        <fullName evidence="1">RNA polymerase subunit beta'</fullName>
    </alternativeName>
    <alternativeName>
        <fullName evidence="1">Transcriptase subunit beta'</fullName>
    </alternativeName>
</protein>
<gene>
    <name evidence="1" type="primary">rpoC</name>
    <name type="ordered locus">BH0388</name>
</gene>
<name>RPOC_BORHD</name>
<reference key="1">
    <citation type="submission" date="2004-12" db="EMBL/GenBank/DDBJ databases">
        <title>The genome sequence of Borrelia hermsii and Borrelia turicatae: comparative analysis of two agents of endemic N. America relapsing fever.</title>
        <authorList>
            <person name="Porcella S.F."/>
            <person name="Raffel S.J."/>
            <person name="Schrumpf M.E."/>
            <person name="Montgomery B."/>
            <person name="Smith T."/>
            <person name="Schwan T.G."/>
        </authorList>
    </citation>
    <scope>NUCLEOTIDE SEQUENCE [LARGE SCALE GENOMIC DNA]</scope>
    <source>
        <strain>HS1 / DAH</strain>
    </source>
</reference>
<evidence type="ECO:0000255" key="1">
    <source>
        <dbReference type="HAMAP-Rule" id="MF_01322"/>
    </source>
</evidence>
<organism>
    <name type="scientific">Borrelia hermsii (strain HS1 / DAH)</name>
    <dbReference type="NCBI Taxonomy" id="314723"/>
    <lineage>
        <taxon>Bacteria</taxon>
        <taxon>Pseudomonadati</taxon>
        <taxon>Spirochaetota</taxon>
        <taxon>Spirochaetia</taxon>
        <taxon>Spirochaetales</taxon>
        <taxon>Borreliaceae</taxon>
        <taxon>Borrelia</taxon>
    </lineage>
</organism>
<comment type="function">
    <text evidence="1">DNA-dependent RNA polymerase catalyzes the transcription of DNA into RNA using the four ribonucleoside triphosphates as substrates.</text>
</comment>
<comment type="catalytic activity">
    <reaction evidence="1">
        <text>RNA(n) + a ribonucleoside 5'-triphosphate = RNA(n+1) + diphosphate</text>
        <dbReference type="Rhea" id="RHEA:21248"/>
        <dbReference type="Rhea" id="RHEA-COMP:14527"/>
        <dbReference type="Rhea" id="RHEA-COMP:17342"/>
        <dbReference type="ChEBI" id="CHEBI:33019"/>
        <dbReference type="ChEBI" id="CHEBI:61557"/>
        <dbReference type="ChEBI" id="CHEBI:140395"/>
        <dbReference type="EC" id="2.7.7.6"/>
    </reaction>
</comment>
<comment type="cofactor">
    <cofactor evidence="1">
        <name>Mg(2+)</name>
        <dbReference type="ChEBI" id="CHEBI:18420"/>
    </cofactor>
    <text evidence="1">Binds 1 Mg(2+) ion per subunit.</text>
</comment>
<comment type="cofactor">
    <cofactor evidence="1">
        <name>Zn(2+)</name>
        <dbReference type="ChEBI" id="CHEBI:29105"/>
    </cofactor>
    <text evidence="1">Binds 2 Zn(2+) ions per subunit.</text>
</comment>
<comment type="subunit">
    <text evidence="1">The RNAP catalytic core consists of 2 alpha, 1 beta, 1 beta' and 1 omega subunit. When a sigma factor is associated with the core the holoenzyme is formed, which can initiate transcription.</text>
</comment>
<comment type="similarity">
    <text evidence="1">Belongs to the RNA polymerase beta' chain family.</text>
</comment>
<proteinExistence type="inferred from homology"/>
<feature type="chain" id="PRO_1000141761" description="DNA-directed RNA polymerase subunit beta'">
    <location>
        <begin position="1"/>
        <end position="1377"/>
    </location>
</feature>
<feature type="binding site" evidence="1">
    <location>
        <position position="60"/>
    </location>
    <ligand>
        <name>Zn(2+)</name>
        <dbReference type="ChEBI" id="CHEBI:29105"/>
        <label>1</label>
    </ligand>
</feature>
<feature type="binding site" evidence="1">
    <location>
        <position position="62"/>
    </location>
    <ligand>
        <name>Zn(2+)</name>
        <dbReference type="ChEBI" id="CHEBI:29105"/>
        <label>1</label>
    </ligand>
</feature>
<feature type="binding site" evidence="1">
    <location>
        <position position="75"/>
    </location>
    <ligand>
        <name>Zn(2+)</name>
        <dbReference type="ChEBI" id="CHEBI:29105"/>
        <label>1</label>
    </ligand>
</feature>
<feature type="binding site" evidence="1">
    <location>
        <position position="78"/>
    </location>
    <ligand>
        <name>Zn(2+)</name>
        <dbReference type="ChEBI" id="CHEBI:29105"/>
        <label>1</label>
    </ligand>
</feature>
<feature type="binding site" evidence="1">
    <location>
        <position position="449"/>
    </location>
    <ligand>
        <name>Mg(2+)</name>
        <dbReference type="ChEBI" id="CHEBI:18420"/>
    </ligand>
</feature>
<feature type="binding site" evidence="1">
    <location>
        <position position="451"/>
    </location>
    <ligand>
        <name>Mg(2+)</name>
        <dbReference type="ChEBI" id="CHEBI:18420"/>
    </ligand>
</feature>
<feature type="binding site" evidence="1">
    <location>
        <position position="453"/>
    </location>
    <ligand>
        <name>Mg(2+)</name>
        <dbReference type="ChEBI" id="CHEBI:18420"/>
    </ligand>
</feature>
<feature type="binding site" evidence="1">
    <location>
        <position position="777"/>
    </location>
    <ligand>
        <name>Zn(2+)</name>
        <dbReference type="ChEBI" id="CHEBI:29105"/>
        <label>2</label>
    </ligand>
</feature>
<feature type="binding site" evidence="1">
    <location>
        <position position="851"/>
    </location>
    <ligand>
        <name>Zn(2+)</name>
        <dbReference type="ChEBI" id="CHEBI:29105"/>
        <label>2</label>
    </ligand>
</feature>
<feature type="binding site" evidence="1">
    <location>
        <position position="858"/>
    </location>
    <ligand>
        <name>Zn(2+)</name>
        <dbReference type="ChEBI" id="CHEBI:29105"/>
        <label>2</label>
    </ligand>
</feature>
<feature type="binding site" evidence="1">
    <location>
        <position position="861"/>
    </location>
    <ligand>
        <name>Zn(2+)</name>
        <dbReference type="ChEBI" id="CHEBI:29105"/>
        <label>2</label>
    </ligand>
</feature>
<dbReference type="EC" id="2.7.7.6" evidence="1"/>
<dbReference type="EMBL" id="CP000048">
    <property type="protein sequence ID" value="AAX16897.1"/>
    <property type="molecule type" value="Genomic_DNA"/>
</dbReference>
<dbReference type="RefSeq" id="WP_012422154.1">
    <property type="nucleotide sequence ID" value="NZ_CP073136.1"/>
</dbReference>
<dbReference type="SMR" id="B2S091"/>
<dbReference type="GeneID" id="71843194"/>
<dbReference type="KEGG" id="bhr:BH0388"/>
<dbReference type="HOGENOM" id="CLU_000524_3_1_12"/>
<dbReference type="Proteomes" id="UP000008834">
    <property type="component" value="Chromosome"/>
</dbReference>
<dbReference type="GO" id="GO:0000428">
    <property type="term" value="C:DNA-directed RNA polymerase complex"/>
    <property type="evidence" value="ECO:0007669"/>
    <property type="project" value="UniProtKB-KW"/>
</dbReference>
<dbReference type="GO" id="GO:0003677">
    <property type="term" value="F:DNA binding"/>
    <property type="evidence" value="ECO:0007669"/>
    <property type="project" value="UniProtKB-UniRule"/>
</dbReference>
<dbReference type="GO" id="GO:0003899">
    <property type="term" value="F:DNA-directed RNA polymerase activity"/>
    <property type="evidence" value="ECO:0007669"/>
    <property type="project" value="UniProtKB-UniRule"/>
</dbReference>
<dbReference type="GO" id="GO:0000287">
    <property type="term" value="F:magnesium ion binding"/>
    <property type="evidence" value="ECO:0007669"/>
    <property type="project" value="UniProtKB-UniRule"/>
</dbReference>
<dbReference type="GO" id="GO:0008270">
    <property type="term" value="F:zinc ion binding"/>
    <property type="evidence" value="ECO:0007669"/>
    <property type="project" value="UniProtKB-UniRule"/>
</dbReference>
<dbReference type="GO" id="GO:0006351">
    <property type="term" value="P:DNA-templated transcription"/>
    <property type="evidence" value="ECO:0007669"/>
    <property type="project" value="UniProtKB-UniRule"/>
</dbReference>
<dbReference type="CDD" id="cd02655">
    <property type="entry name" value="RNAP_beta'_C"/>
    <property type="match status" value="1"/>
</dbReference>
<dbReference type="CDD" id="cd01609">
    <property type="entry name" value="RNAP_beta'_N"/>
    <property type="match status" value="1"/>
</dbReference>
<dbReference type="Gene3D" id="1.10.132.30">
    <property type="match status" value="1"/>
</dbReference>
<dbReference type="Gene3D" id="1.10.150.390">
    <property type="match status" value="1"/>
</dbReference>
<dbReference type="Gene3D" id="1.10.1790.20">
    <property type="match status" value="1"/>
</dbReference>
<dbReference type="Gene3D" id="1.10.40.90">
    <property type="match status" value="1"/>
</dbReference>
<dbReference type="Gene3D" id="2.40.40.20">
    <property type="match status" value="1"/>
</dbReference>
<dbReference type="Gene3D" id="2.40.50.100">
    <property type="match status" value="2"/>
</dbReference>
<dbReference type="Gene3D" id="4.10.860.120">
    <property type="entry name" value="RNA polymerase II, clamp domain"/>
    <property type="match status" value="1"/>
</dbReference>
<dbReference type="Gene3D" id="1.10.274.100">
    <property type="entry name" value="RNA polymerase Rpb1, domain 3"/>
    <property type="match status" value="2"/>
</dbReference>
<dbReference type="HAMAP" id="MF_01322">
    <property type="entry name" value="RNApol_bact_RpoC"/>
    <property type="match status" value="1"/>
</dbReference>
<dbReference type="InterPro" id="IPR045867">
    <property type="entry name" value="DNA-dir_RpoC_beta_prime"/>
</dbReference>
<dbReference type="InterPro" id="IPR012754">
    <property type="entry name" value="DNA-dir_RpoC_beta_prime_bact"/>
</dbReference>
<dbReference type="InterPro" id="IPR000722">
    <property type="entry name" value="RNA_pol_asu"/>
</dbReference>
<dbReference type="InterPro" id="IPR006592">
    <property type="entry name" value="RNA_pol_N"/>
</dbReference>
<dbReference type="InterPro" id="IPR007080">
    <property type="entry name" value="RNA_pol_Rpb1_1"/>
</dbReference>
<dbReference type="InterPro" id="IPR007066">
    <property type="entry name" value="RNA_pol_Rpb1_3"/>
</dbReference>
<dbReference type="InterPro" id="IPR042102">
    <property type="entry name" value="RNA_pol_Rpb1_3_sf"/>
</dbReference>
<dbReference type="InterPro" id="IPR007083">
    <property type="entry name" value="RNA_pol_Rpb1_4"/>
</dbReference>
<dbReference type="InterPro" id="IPR007081">
    <property type="entry name" value="RNA_pol_Rpb1_5"/>
</dbReference>
<dbReference type="InterPro" id="IPR044893">
    <property type="entry name" value="RNA_pol_Rpb1_clamp_domain"/>
</dbReference>
<dbReference type="InterPro" id="IPR038120">
    <property type="entry name" value="Rpb1_funnel_sf"/>
</dbReference>
<dbReference type="NCBIfam" id="TIGR02386">
    <property type="entry name" value="rpoC_TIGR"/>
    <property type="match status" value="1"/>
</dbReference>
<dbReference type="PANTHER" id="PTHR19376">
    <property type="entry name" value="DNA-DIRECTED RNA POLYMERASE"/>
    <property type="match status" value="1"/>
</dbReference>
<dbReference type="PANTHER" id="PTHR19376:SF54">
    <property type="entry name" value="DNA-DIRECTED RNA POLYMERASE SUBUNIT BETA"/>
    <property type="match status" value="1"/>
</dbReference>
<dbReference type="Pfam" id="PF04997">
    <property type="entry name" value="RNA_pol_Rpb1_1"/>
    <property type="match status" value="1"/>
</dbReference>
<dbReference type="Pfam" id="PF00623">
    <property type="entry name" value="RNA_pol_Rpb1_2"/>
    <property type="match status" value="2"/>
</dbReference>
<dbReference type="Pfam" id="PF04983">
    <property type="entry name" value="RNA_pol_Rpb1_3"/>
    <property type="match status" value="1"/>
</dbReference>
<dbReference type="Pfam" id="PF05000">
    <property type="entry name" value="RNA_pol_Rpb1_4"/>
    <property type="match status" value="1"/>
</dbReference>
<dbReference type="Pfam" id="PF04998">
    <property type="entry name" value="RNA_pol_Rpb1_5"/>
    <property type="match status" value="1"/>
</dbReference>
<dbReference type="SMART" id="SM00663">
    <property type="entry name" value="RPOLA_N"/>
    <property type="match status" value="1"/>
</dbReference>
<dbReference type="SUPFAM" id="SSF64484">
    <property type="entry name" value="beta and beta-prime subunits of DNA dependent RNA-polymerase"/>
    <property type="match status" value="1"/>
</dbReference>
<keyword id="KW-0240">DNA-directed RNA polymerase</keyword>
<keyword id="KW-0460">Magnesium</keyword>
<keyword id="KW-0479">Metal-binding</keyword>
<keyword id="KW-0548">Nucleotidyltransferase</keyword>
<keyword id="KW-0804">Transcription</keyword>
<keyword id="KW-0808">Transferase</keyword>
<keyword id="KW-0862">Zinc</keyword>
<accession>B2S091</accession>
<sequence>MKEIKDFEKIRIKIASRDQIRSWSYGEVKKSETINYRTLRPEKDGLFCERIFGTTKEWECYCGKFKSIRYKGIICDRCNVEVTHFKVRRERMGHIELSAPVAHIWYYKYIPSRIGLLLDITASNLNSILYYEKYIVIEPGDTDLKKMQLLNEDEYSEAKERYGMSFSASMGAEAIKTLLENLDLDELSSKLRLQMIDKDDKTDKKLLRRLEIIENFKVSGNKPEWMIMDVLPVIPPEIRPMVQLDGGRFATSDLNDLYRRVINRNNRLRKLLLLNAPEIIVRNEKRMLQESVDSLFDNSHKRKVVKGTSNRPLKSLSDALKGKQGRFRQNLLGKRVDYSGRSVIVVGPELKLHQCGIPAKMALELFKPFVIRKLIESESVFNIKRAKSLIEQEVDEVWQILDNVIKEHPVLLNRAPTLHRLGIQAFEPVLVEGKAIKLHPLVCHAYNADFDGDQMAVHVPLTPAAQAESWALMLSTNNLLNPANGHPIVFPSQDIVLGLYYLTMERKNVVGEGRKFANFNHVLLAINNKSLDYNAQIYVKIDGEYIATTAGRVVFNEALPGKITFVNKTLSDYELQSLISEVYVIYGSSIVIEMLDIIKELGFRYATKFGCTISMSDIIVPEEKKIYVDKANREIAKIQNDYTKGVITGEERYNNVVSVWSKTNEELTNKMMEILKKDRDGFNVIYMMADSGARGSRNQIRQLAGMRGLMAKTSGDIIELPIISNFKEGLSVIEFFISTNGARKGLADTALKTADAGYLTRRLVDIAQDVVVRIEDCGTINGIKVEALKNGEEIVEPLREKAVGSYSIERIKSPITGEIILDVNEEVTEDKIKLLETVGIDKLVIRSVLTCEAEHGVCQKCYGRDFSNNKPVNIGEAVGIIAAQSIGQPGTQLTMRTFHIGGVAQAGSEDDKIALKNAFILNGLEGFNVQVDDGLLFTRKGTLKVINVIYEENIKEIKELKVLDSQKVIKGMPLFINKNGIDVLSTHIGYVKIKDDKLMIVSEEQEISLKAGTRLEINVGDYVEAGRVIGTFDPFAEPIIAEFKGKVKFKDIILGTTLKEEINLETGNIEKRITDQVFESLDPRILIINDRGVEITSYVLPGDAYLQVEDGQDINIGDVIAKLSKGSEKTQDITGGLPRVNDLFETRIPKNLTEMAKVSGIVQFKAIQKGKRLINVLDEYGVEHKHYIPAGKHLLVRDGDVVKAGDMLCDGRINPHDVLEILGGISLQEFLLAEIQDVYRKQGVSINDKHIGVIIKQMMKKVKIVSVGDTNFVYNQKVDKHAFYEQNKRVIEQGGEPAVASPILIGITKASLNIDSFISAASFQETTKVLTDASIAGSVDDLKGLKENVVIGHLIPTGTGMNLYKRVKVRENSSSEV</sequence>